<proteinExistence type="evidence at protein level"/>
<accession>Q2YIQ6</accession>
<accession>Q578Z0</accession>
<accession>Q9ZB27</accession>
<sequence>MTKFWIGTSWKMNKTLAEARLFAEALKAADAGRSPDIQRFVIPPFTAVREVKEILSGTSVKVGAQNMHWADQGAWTGEISPLMLKDCNLDIVELGHSERREHFGETNETVGLKVEAAVRHGLIPLICIGETLEDRESGRAAAVLEEEVRGALSKLSEAQKQAEILFAYEPVWAIGENGIPASADYADARQAEIIAVAQSVLARRVPCLYGGSVNPGNCEELIACPHIDGLFIGRSAWNVEGYLDILARCATKVQAN</sequence>
<comment type="function">
    <text evidence="2">Catalyzes the isomerization of D-erythrulose-4P to L-erythrulose-1P. Involved in the degradation pathway of erythritol, that allows B.abortus to grow on this compound as the sole carbon source.</text>
</comment>
<comment type="catalytic activity">
    <reaction evidence="2">
        <text>L-erythrulose 1-phosphate = D-erythrulose 4-phosphate</text>
        <dbReference type="Rhea" id="RHEA:49588"/>
        <dbReference type="ChEBI" id="CHEBI:58002"/>
        <dbReference type="ChEBI" id="CHEBI:90796"/>
        <dbReference type="EC" id="5.3.1.33"/>
    </reaction>
</comment>
<comment type="pathway">
    <text evidence="2">Carbohydrate metabolism; erythritol degradation.</text>
</comment>
<comment type="subunit">
    <text evidence="1">Homodimer.</text>
</comment>
<comment type="subcellular location">
    <subcellularLocation>
        <location evidence="1">Cytoplasm</location>
    </subcellularLocation>
</comment>
<comment type="disruption phenotype">
    <text evidence="2">Cells lacking this gene do not grow on erythritol as sole carbon source, in contrast to wild-type.</text>
</comment>
<comment type="similarity">
    <text evidence="4">Belongs to the triosephosphate isomerase family.</text>
</comment>
<keyword id="KW-0119">Carbohydrate metabolism</keyword>
<keyword id="KW-0963">Cytoplasm</keyword>
<keyword id="KW-0413">Isomerase</keyword>
<keyword id="KW-1185">Reference proteome</keyword>
<name>ERYH_BRUA2</name>
<evidence type="ECO:0000250" key="1">
    <source>
        <dbReference type="UniProtKB" id="P9WG43"/>
    </source>
</evidence>
<evidence type="ECO:0000269" key="2">
    <source>
    </source>
</evidence>
<evidence type="ECO:0000303" key="3">
    <source>
    </source>
</evidence>
<evidence type="ECO:0000305" key="4"/>
<evidence type="ECO:0000305" key="5">
    <source>
    </source>
</evidence>
<evidence type="ECO:0000312" key="6">
    <source>
        <dbReference type="EMBL" id="CAJ12533.1"/>
    </source>
</evidence>
<dbReference type="EC" id="5.3.1.33" evidence="2"/>
<dbReference type="EMBL" id="U57100">
    <property type="protein sequence ID" value="AAD11524.1"/>
    <property type="molecule type" value="Genomic_DNA"/>
</dbReference>
<dbReference type="EMBL" id="AM040265">
    <property type="protein sequence ID" value="CAJ12533.1"/>
    <property type="molecule type" value="Genomic_DNA"/>
</dbReference>
<dbReference type="RefSeq" id="WP_002965777.1">
    <property type="nucleotide sequence ID" value="NZ_KN046823.1"/>
</dbReference>
<dbReference type="SMR" id="Q2YIQ6"/>
<dbReference type="STRING" id="359391.BAB2_0367"/>
<dbReference type="KEGG" id="bmf:BAB2_0367"/>
<dbReference type="PATRIC" id="fig|359391.11.peg.2319"/>
<dbReference type="HOGENOM" id="CLU_024251_2_3_5"/>
<dbReference type="PhylomeDB" id="Q2YIQ6"/>
<dbReference type="BioCyc" id="MetaCyc:BAB_RS28115-MONOMER"/>
<dbReference type="BRENDA" id="5.3.1.33">
    <property type="organism ID" value="994"/>
</dbReference>
<dbReference type="UniPathway" id="UPA01066"/>
<dbReference type="Proteomes" id="UP000002719">
    <property type="component" value="Chromosome II"/>
</dbReference>
<dbReference type="GO" id="GO:0005829">
    <property type="term" value="C:cytosol"/>
    <property type="evidence" value="ECO:0007669"/>
    <property type="project" value="TreeGrafter"/>
</dbReference>
<dbReference type="GO" id="GO:0004807">
    <property type="term" value="F:triose-phosphate isomerase activity"/>
    <property type="evidence" value="ECO:0007669"/>
    <property type="project" value="InterPro"/>
</dbReference>
<dbReference type="GO" id="GO:0006094">
    <property type="term" value="P:gluconeogenesis"/>
    <property type="evidence" value="ECO:0007669"/>
    <property type="project" value="TreeGrafter"/>
</dbReference>
<dbReference type="GO" id="GO:0046166">
    <property type="term" value="P:glyceraldehyde-3-phosphate biosynthetic process"/>
    <property type="evidence" value="ECO:0007669"/>
    <property type="project" value="TreeGrafter"/>
</dbReference>
<dbReference type="GO" id="GO:0019563">
    <property type="term" value="P:glycerol catabolic process"/>
    <property type="evidence" value="ECO:0007669"/>
    <property type="project" value="TreeGrafter"/>
</dbReference>
<dbReference type="GO" id="GO:0006096">
    <property type="term" value="P:glycolytic process"/>
    <property type="evidence" value="ECO:0007669"/>
    <property type="project" value="TreeGrafter"/>
</dbReference>
<dbReference type="CDD" id="cd00311">
    <property type="entry name" value="TIM"/>
    <property type="match status" value="1"/>
</dbReference>
<dbReference type="Gene3D" id="3.20.20.70">
    <property type="entry name" value="Aldolase class I"/>
    <property type="match status" value="1"/>
</dbReference>
<dbReference type="InterPro" id="IPR013785">
    <property type="entry name" value="Aldolase_TIM"/>
</dbReference>
<dbReference type="InterPro" id="IPR035990">
    <property type="entry name" value="TIM_sf"/>
</dbReference>
<dbReference type="InterPro" id="IPR000652">
    <property type="entry name" value="Triosephosphate_isomerase"/>
</dbReference>
<dbReference type="InterPro" id="IPR020861">
    <property type="entry name" value="Triosephosphate_isomerase_AS"/>
</dbReference>
<dbReference type="NCBIfam" id="NF000722">
    <property type="entry name" value="PRK00042.2-1"/>
    <property type="match status" value="1"/>
</dbReference>
<dbReference type="PANTHER" id="PTHR21139">
    <property type="entry name" value="TRIOSEPHOSPHATE ISOMERASE"/>
    <property type="match status" value="1"/>
</dbReference>
<dbReference type="PANTHER" id="PTHR21139:SF42">
    <property type="entry name" value="TRIOSEPHOSPHATE ISOMERASE"/>
    <property type="match status" value="1"/>
</dbReference>
<dbReference type="Pfam" id="PF00121">
    <property type="entry name" value="TIM"/>
    <property type="match status" value="1"/>
</dbReference>
<dbReference type="SUPFAM" id="SSF51351">
    <property type="entry name" value="Triosephosphate isomerase (TIM)"/>
    <property type="match status" value="1"/>
</dbReference>
<dbReference type="PROSITE" id="PS00171">
    <property type="entry name" value="TIM_1"/>
    <property type="match status" value="1"/>
</dbReference>
<dbReference type="PROSITE" id="PS51440">
    <property type="entry name" value="TIM_2"/>
    <property type="match status" value="1"/>
</dbReference>
<gene>
    <name evidence="3" type="primary">eryH</name>
    <name evidence="6" type="synonym">tpiA-2</name>
    <name type="ordered locus">BAB2_0367</name>
</gene>
<feature type="chain" id="PRO_0000090190" description="L-erythrulose-1-phosphate isomerase">
    <location>
        <begin position="1"/>
        <end position="256"/>
    </location>
</feature>
<feature type="active site" description="Electrophile" evidence="1">
    <location>
        <position position="96"/>
    </location>
</feature>
<feature type="active site" description="Proton acceptor" evidence="1">
    <location>
        <position position="169"/>
    </location>
</feature>
<feature type="binding site" evidence="1">
    <location>
        <position position="175"/>
    </location>
    <ligand>
        <name>substrate</name>
    </ligand>
</feature>
<feature type="binding site" evidence="1">
    <location>
        <position position="212"/>
    </location>
    <ligand>
        <name>substrate</name>
    </ligand>
</feature>
<organism>
    <name type="scientific">Brucella abortus (strain 2308)</name>
    <dbReference type="NCBI Taxonomy" id="359391"/>
    <lineage>
        <taxon>Bacteria</taxon>
        <taxon>Pseudomonadati</taxon>
        <taxon>Pseudomonadota</taxon>
        <taxon>Alphaproteobacteria</taxon>
        <taxon>Hyphomicrobiales</taxon>
        <taxon>Brucellaceae</taxon>
        <taxon>Brucella/Ochrobactrum group</taxon>
        <taxon>Brucella</taxon>
    </lineage>
</organism>
<protein>
    <recommendedName>
        <fullName evidence="5">L-erythrulose-1-phosphate isomerase</fullName>
        <ecNumber evidence="2">5.3.1.33</ecNumber>
    </recommendedName>
    <alternativeName>
        <fullName evidence="3">D-3-tetrulose-4-phosphate isomerase</fullName>
    </alternativeName>
</protein>
<reference key="1">
    <citation type="journal article" date="2000" name="Microbiology">
        <title>The genes for erythritol catabolism are organized as an inducible operon in Brucella abortus.</title>
        <authorList>
            <person name="Sangari F.J."/>
            <person name="Aguero J."/>
            <person name="Garcia-Lobo J.M."/>
        </authorList>
    </citation>
    <scope>NUCLEOTIDE SEQUENCE [GENOMIC DNA]</scope>
    <source>
        <strain>2308</strain>
    </source>
</reference>
<reference key="2">
    <citation type="journal article" date="2005" name="Infect. Immun.">
        <title>Whole-genome analyses of speciation events in pathogenic Brucellae.</title>
        <authorList>
            <person name="Chain P.S."/>
            <person name="Comerci D.J."/>
            <person name="Tolmasky M.E."/>
            <person name="Larimer F.W."/>
            <person name="Malfatti S.A."/>
            <person name="Vergez L.M."/>
            <person name="Aguero F."/>
            <person name="Land M.L."/>
            <person name="Ugalde R.A."/>
            <person name="Garcia E."/>
        </authorList>
    </citation>
    <scope>NUCLEOTIDE SEQUENCE [LARGE SCALE GENOMIC DNA]</scope>
    <source>
        <strain>2308</strain>
    </source>
</reference>
<reference key="3">
    <citation type="journal article" date="2014" name="Proc. Natl. Acad. Sci. U.S.A.">
        <title>Erythritol feeds the pentose phosphate pathway via three new isomerases leading to D-erythrose-4-phosphate in Brucella.</title>
        <authorList>
            <person name="Barbier T."/>
            <person name="Collard F."/>
            <person name="Zuniga-Ripa A."/>
            <person name="Moriyon I."/>
            <person name="Godard T."/>
            <person name="Becker J."/>
            <person name="Wittmann C."/>
            <person name="Van Schaftingen E."/>
            <person name="Letesson J.J."/>
        </authorList>
    </citation>
    <scope>FUNCTION</scope>
    <scope>CATALYTIC ACTIVITY</scope>
    <scope>PATHWAY</scope>
    <scope>DISRUPTION PHENOTYPE</scope>
    <source>
        <strain>2308</strain>
    </source>
</reference>